<dbReference type="EC" id="2.7.4.8" evidence="1"/>
<dbReference type="EMBL" id="CP000024">
    <property type="protein sequence ID" value="AAV62968.1"/>
    <property type="molecule type" value="Genomic_DNA"/>
</dbReference>
<dbReference type="RefSeq" id="WP_011226296.1">
    <property type="nucleotide sequence ID" value="NC_006449.1"/>
</dbReference>
<dbReference type="SMR" id="Q5LYX1"/>
<dbReference type="GeneID" id="66899192"/>
<dbReference type="KEGG" id="stc:str1431"/>
<dbReference type="HOGENOM" id="CLU_001715_1_0_9"/>
<dbReference type="GO" id="GO:0005829">
    <property type="term" value="C:cytosol"/>
    <property type="evidence" value="ECO:0007669"/>
    <property type="project" value="TreeGrafter"/>
</dbReference>
<dbReference type="GO" id="GO:0005524">
    <property type="term" value="F:ATP binding"/>
    <property type="evidence" value="ECO:0007669"/>
    <property type="project" value="UniProtKB-UniRule"/>
</dbReference>
<dbReference type="GO" id="GO:0004385">
    <property type="term" value="F:guanylate kinase activity"/>
    <property type="evidence" value="ECO:0007669"/>
    <property type="project" value="UniProtKB-UniRule"/>
</dbReference>
<dbReference type="CDD" id="cd00071">
    <property type="entry name" value="GMPK"/>
    <property type="match status" value="1"/>
</dbReference>
<dbReference type="FunFam" id="3.40.50.300:FF:000855">
    <property type="entry name" value="Guanylate kinase"/>
    <property type="match status" value="1"/>
</dbReference>
<dbReference type="FunFam" id="3.30.63.10:FF:000002">
    <property type="entry name" value="Guanylate kinase 1"/>
    <property type="match status" value="1"/>
</dbReference>
<dbReference type="Gene3D" id="3.30.63.10">
    <property type="entry name" value="Guanylate Kinase phosphate binding domain"/>
    <property type="match status" value="1"/>
</dbReference>
<dbReference type="Gene3D" id="3.40.50.300">
    <property type="entry name" value="P-loop containing nucleotide triphosphate hydrolases"/>
    <property type="match status" value="1"/>
</dbReference>
<dbReference type="HAMAP" id="MF_00328">
    <property type="entry name" value="Guanylate_kinase"/>
    <property type="match status" value="1"/>
</dbReference>
<dbReference type="InterPro" id="IPR008145">
    <property type="entry name" value="GK/Ca_channel_bsu"/>
</dbReference>
<dbReference type="InterPro" id="IPR008144">
    <property type="entry name" value="Guanylate_kin-like_dom"/>
</dbReference>
<dbReference type="InterPro" id="IPR017665">
    <property type="entry name" value="Guanylate_kinase"/>
</dbReference>
<dbReference type="InterPro" id="IPR020590">
    <property type="entry name" value="Guanylate_kinase_CS"/>
</dbReference>
<dbReference type="InterPro" id="IPR027417">
    <property type="entry name" value="P-loop_NTPase"/>
</dbReference>
<dbReference type="NCBIfam" id="TIGR03263">
    <property type="entry name" value="guanyl_kin"/>
    <property type="match status" value="1"/>
</dbReference>
<dbReference type="PANTHER" id="PTHR23117:SF13">
    <property type="entry name" value="GUANYLATE KINASE"/>
    <property type="match status" value="1"/>
</dbReference>
<dbReference type="PANTHER" id="PTHR23117">
    <property type="entry name" value="GUANYLATE KINASE-RELATED"/>
    <property type="match status" value="1"/>
</dbReference>
<dbReference type="Pfam" id="PF00625">
    <property type="entry name" value="Guanylate_kin"/>
    <property type="match status" value="1"/>
</dbReference>
<dbReference type="SMART" id="SM00072">
    <property type="entry name" value="GuKc"/>
    <property type="match status" value="1"/>
</dbReference>
<dbReference type="SUPFAM" id="SSF52540">
    <property type="entry name" value="P-loop containing nucleoside triphosphate hydrolases"/>
    <property type="match status" value="1"/>
</dbReference>
<dbReference type="PROSITE" id="PS00856">
    <property type="entry name" value="GUANYLATE_KINASE_1"/>
    <property type="match status" value="1"/>
</dbReference>
<dbReference type="PROSITE" id="PS50052">
    <property type="entry name" value="GUANYLATE_KINASE_2"/>
    <property type="match status" value="1"/>
</dbReference>
<gene>
    <name evidence="1" type="primary">gmk</name>
    <name type="ordered locus">str1431</name>
</gene>
<organism>
    <name type="scientific">Streptococcus thermophilus (strain CNRZ 1066)</name>
    <dbReference type="NCBI Taxonomy" id="299768"/>
    <lineage>
        <taxon>Bacteria</taxon>
        <taxon>Bacillati</taxon>
        <taxon>Bacillota</taxon>
        <taxon>Bacilli</taxon>
        <taxon>Lactobacillales</taxon>
        <taxon>Streptococcaceae</taxon>
        <taxon>Streptococcus</taxon>
    </lineage>
</organism>
<name>KGUA_STRT1</name>
<sequence>MSERGLLIVFSGPSGVGKGTVRQEIFSKSDHKFEYSVSMTTRAQRPGEVDGKDYFFRSREEFEELIRNGQMLEYAEYVGNYYGTPLAYVNETLDKGIDVFLEIEVQGALQVKKKVPDAVFIFLTPPDLNELEERLVGRGTDSEEVIAQRIERAREEIALMSEYDYTIVNDEVPLAAERVKRVIEAEHFRVERVIGHYRNMISDKRLSDK</sequence>
<evidence type="ECO:0000255" key="1">
    <source>
        <dbReference type="HAMAP-Rule" id="MF_00328"/>
    </source>
</evidence>
<accession>Q5LYX1</accession>
<proteinExistence type="inferred from homology"/>
<comment type="function">
    <text evidence="1">Essential for recycling GMP and indirectly, cGMP.</text>
</comment>
<comment type="catalytic activity">
    <reaction evidence="1">
        <text>GMP + ATP = GDP + ADP</text>
        <dbReference type="Rhea" id="RHEA:20780"/>
        <dbReference type="ChEBI" id="CHEBI:30616"/>
        <dbReference type="ChEBI" id="CHEBI:58115"/>
        <dbReference type="ChEBI" id="CHEBI:58189"/>
        <dbReference type="ChEBI" id="CHEBI:456216"/>
        <dbReference type="EC" id="2.7.4.8"/>
    </reaction>
</comment>
<comment type="subcellular location">
    <subcellularLocation>
        <location evidence="1">Cytoplasm</location>
    </subcellularLocation>
</comment>
<comment type="similarity">
    <text evidence="1">Belongs to the guanylate kinase family.</text>
</comment>
<protein>
    <recommendedName>
        <fullName evidence="1">Guanylate kinase</fullName>
        <ecNumber evidence="1">2.7.4.8</ecNumber>
    </recommendedName>
    <alternativeName>
        <fullName evidence="1">GMP kinase</fullName>
    </alternativeName>
</protein>
<feature type="chain" id="PRO_0000266419" description="Guanylate kinase">
    <location>
        <begin position="1"/>
        <end position="209"/>
    </location>
</feature>
<feature type="domain" description="Guanylate kinase-like" evidence="1">
    <location>
        <begin position="5"/>
        <end position="184"/>
    </location>
</feature>
<feature type="binding site" evidence="1">
    <location>
        <begin position="12"/>
        <end position="19"/>
    </location>
    <ligand>
        <name>ATP</name>
        <dbReference type="ChEBI" id="CHEBI:30616"/>
    </ligand>
</feature>
<reference key="1">
    <citation type="journal article" date="2004" name="Nat. Biotechnol.">
        <title>Complete sequence and comparative genome analysis of the dairy bacterium Streptococcus thermophilus.</title>
        <authorList>
            <person name="Bolotin A."/>
            <person name="Quinquis B."/>
            <person name="Renault P."/>
            <person name="Sorokin A."/>
            <person name="Ehrlich S.D."/>
            <person name="Kulakauskas S."/>
            <person name="Lapidus A."/>
            <person name="Goltsman E."/>
            <person name="Mazur M."/>
            <person name="Pusch G.D."/>
            <person name="Fonstein M."/>
            <person name="Overbeek R."/>
            <person name="Kyprides N."/>
            <person name="Purnelle B."/>
            <person name="Prozzi D."/>
            <person name="Ngui K."/>
            <person name="Masuy D."/>
            <person name="Hancy F."/>
            <person name="Burteau S."/>
            <person name="Boutry M."/>
            <person name="Delcour J."/>
            <person name="Goffeau A."/>
            <person name="Hols P."/>
        </authorList>
    </citation>
    <scope>NUCLEOTIDE SEQUENCE [LARGE SCALE GENOMIC DNA]</scope>
    <source>
        <strain>CNRZ 1066</strain>
    </source>
</reference>
<keyword id="KW-0067">ATP-binding</keyword>
<keyword id="KW-0963">Cytoplasm</keyword>
<keyword id="KW-0418">Kinase</keyword>
<keyword id="KW-0547">Nucleotide-binding</keyword>
<keyword id="KW-0808">Transferase</keyword>